<feature type="peptide" id="PRO_0000404616" description="Dermaseptin-J7" evidence="3">
    <location>
        <begin position="1"/>
        <end position="33"/>
    </location>
</feature>
<feature type="modified residue" description="Valine amide" evidence="3">
    <location>
        <position position="33"/>
    </location>
</feature>
<feature type="unsure residue" description="L or I" evidence="3">
    <location>
        <position position="2"/>
    </location>
</feature>
<feature type="unsure residue" description="K or Q" evidence="3">
    <location>
        <position position="5"/>
    </location>
</feature>
<feature type="unsure residue" description="I or L" evidence="3">
    <location>
        <position position="6"/>
    </location>
</feature>
<feature type="unsure residue" description="K or Q" evidence="3">
    <location>
        <position position="7"/>
    </location>
</feature>
<feature type="unsure residue" description="K or Q" evidence="3">
    <location>
        <position position="11"/>
    </location>
</feature>
<feature type="unsure residue" description="K or Q" evidence="3">
    <location>
        <position position="15"/>
    </location>
</feature>
<feature type="unsure residue" description="K or Q" evidence="3">
    <location>
        <position position="19"/>
    </location>
</feature>
<feature type="unsure residue" description="K or Q" evidence="3">
    <location>
        <position position="23"/>
    </location>
</feature>
<feature type="unsure residue" description="L or I" evidence="3">
    <location>
        <position position="26"/>
    </location>
</feature>
<reference evidence="5" key="1">
    <citation type="journal article" date="2011" name="Toxicon">
        <title>Peptidomic dissection of the skin secretion of Phasmahyla jandaia (Bokermann and Sazima, 1978) (Anura, Hylidae, Phyllomedusinae).</title>
        <authorList>
            <person name="Rates B."/>
            <person name="Silva L.P."/>
            <person name="Ireno I.C."/>
            <person name="Leite F.S."/>
            <person name="Borges M.H."/>
            <person name="Bloch C. Jr."/>
            <person name="De Lima M.E."/>
            <person name="Pimenta A.M."/>
        </authorList>
    </citation>
    <scope>PROTEIN SEQUENCE</scope>
    <scope>SUBCELLULAR LOCATION</scope>
    <scope>TISSUE SPECIFICITY</scope>
    <scope>MASS SPECTROMETRY</scope>
    <scope>AMIDATION AT VAL-33</scope>
    <source>
        <tissue evidence="3">Skin secretion</tissue>
    </source>
</reference>
<protein>
    <recommendedName>
        <fullName evidence="4">Dermaseptin-J7</fullName>
        <shortName evidence="4">DRS-J7</shortName>
    </recommendedName>
</protein>
<accession>P86639</accession>
<proteinExistence type="evidence at protein level"/>
<keyword id="KW-0027">Amidation</keyword>
<keyword id="KW-0878">Amphibian defense peptide</keyword>
<keyword id="KW-0044">Antibiotic</keyword>
<keyword id="KW-0929">Antimicrobial</keyword>
<keyword id="KW-0903">Direct protein sequencing</keyword>
<keyword id="KW-0964">Secreted</keyword>
<evidence type="ECO:0000250" key="1">
    <source>
        <dbReference type="UniProtKB" id="P84921"/>
    </source>
</evidence>
<evidence type="ECO:0000255" key="2"/>
<evidence type="ECO:0000269" key="3">
    <source>
    </source>
</evidence>
<evidence type="ECO:0000303" key="4">
    <source>
    </source>
</evidence>
<evidence type="ECO:0000305" key="5"/>
<name>DMS7_PHAJA</name>
<dbReference type="SMR" id="P86639"/>
<dbReference type="GO" id="GO:0005576">
    <property type="term" value="C:extracellular region"/>
    <property type="evidence" value="ECO:0007669"/>
    <property type="project" value="UniProtKB-SubCell"/>
</dbReference>
<dbReference type="GO" id="GO:0042742">
    <property type="term" value="P:defense response to bacterium"/>
    <property type="evidence" value="ECO:0007669"/>
    <property type="project" value="UniProtKB-KW"/>
</dbReference>
<dbReference type="InterPro" id="IPR022731">
    <property type="entry name" value="Dermaseptin_dom"/>
</dbReference>
<dbReference type="Pfam" id="PF12121">
    <property type="entry name" value="DD_K"/>
    <property type="match status" value="1"/>
</dbReference>
<organism>
    <name type="scientific">Phasmahyla jandaia</name>
    <name type="common">Jandaia leaf frog</name>
    <name type="synonym">Phyllomedusa jandaia</name>
    <dbReference type="NCBI Taxonomy" id="762504"/>
    <lineage>
        <taxon>Eukaryota</taxon>
        <taxon>Metazoa</taxon>
        <taxon>Chordata</taxon>
        <taxon>Craniata</taxon>
        <taxon>Vertebrata</taxon>
        <taxon>Euteleostomi</taxon>
        <taxon>Amphibia</taxon>
        <taxon>Batrachia</taxon>
        <taxon>Anura</taxon>
        <taxon>Neobatrachia</taxon>
        <taxon>Hyloidea</taxon>
        <taxon>Hylidae</taxon>
        <taxon>Phyllomedusinae</taxon>
        <taxon>Phasmahyla</taxon>
    </lineage>
</organism>
<comment type="function">
    <text evidence="1">Has antimicrobial activity.</text>
</comment>
<comment type="subcellular location">
    <subcellularLocation>
        <location evidence="3">Secreted</location>
    </subcellularLocation>
</comment>
<comment type="tissue specificity">
    <text evidence="3">Expressed by the skin glands.</text>
</comment>
<comment type="mass spectrometry" mass="3149.9" method="MALDI" evidence="3"/>
<comment type="similarity">
    <text evidence="2">Belongs to the frog skin active peptide (FSAP) family. Dermaseptin subfamily.</text>
</comment>
<sequence length="33" mass="3153">GLWSKIKAAGKEAAKAAAKAAGKAALNAVSEAV</sequence>